<name>RUVA_BIFLO</name>
<gene>
    <name evidence="1" type="primary">ruvA</name>
    <name type="ordered locus">BL0728</name>
</gene>
<reference key="1">
    <citation type="journal article" date="2002" name="Proc. Natl. Acad. Sci. U.S.A.">
        <title>The genome sequence of Bifidobacterium longum reflects its adaptation to the human gastrointestinal tract.</title>
        <authorList>
            <person name="Schell M.A."/>
            <person name="Karmirantzou M."/>
            <person name="Snel B."/>
            <person name="Vilanova D."/>
            <person name="Berger B."/>
            <person name="Pessi G."/>
            <person name="Zwahlen M.-C."/>
            <person name="Desiere F."/>
            <person name="Bork P."/>
            <person name="Delley M."/>
            <person name="Pridmore R.D."/>
            <person name="Arigoni F."/>
        </authorList>
    </citation>
    <scope>NUCLEOTIDE SEQUENCE [LARGE SCALE GENOMIC DNA]</scope>
    <source>
        <strain>NCC 2705</strain>
    </source>
</reference>
<comment type="function">
    <text evidence="1">The RuvA-RuvB-RuvC complex processes Holliday junction (HJ) DNA during genetic recombination and DNA repair, while the RuvA-RuvB complex plays an important role in the rescue of blocked DNA replication forks via replication fork reversal (RFR). RuvA specifically binds to HJ cruciform DNA, conferring on it an open structure. The RuvB hexamer acts as an ATP-dependent pump, pulling dsDNA into and through the RuvAB complex. HJ branch migration allows RuvC to scan DNA until it finds its consensus sequence, where it cleaves and resolves the cruciform DNA.</text>
</comment>
<comment type="subunit">
    <text evidence="1">Homotetramer. Forms an RuvA(8)-RuvB(12)-Holliday junction (HJ) complex. HJ DNA is sandwiched between 2 RuvA tetramers; dsDNA enters through RuvA and exits via RuvB. An RuvB hexamer assembles on each DNA strand where it exits the tetramer. Each RuvB hexamer is contacted by two RuvA subunits (via domain III) on 2 adjacent RuvB subunits; this complex drives branch migration. In the full resolvosome a probable DNA-RuvA(4)-RuvB(12)-RuvC(2) complex forms which resolves the HJ.</text>
</comment>
<comment type="subcellular location">
    <subcellularLocation>
        <location evidence="1">Cytoplasm</location>
    </subcellularLocation>
</comment>
<comment type="domain">
    <text evidence="1">Has three domains with a flexible linker between the domains II and III and assumes an 'L' shape. Domain III is highly mobile and contacts RuvB.</text>
</comment>
<comment type="similarity">
    <text evidence="1">Belongs to the RuvA family.</text>
</comment>
<evidence type="ECO:0000255" key="1">
    <source>
        <dbReference type="HAMAP-Rule" id="MF_00031"/>
    </source>
</evidence>
<proteinExistence type="inferred from homology"/>
<accession>Q8G6B8</accession>
<dbReference type="EMBL" id="AE014295">
    <property type="protein sequence ID" value="AAN24545.1"/>
    <property type="molecule type" value="Genomic_DNA"/>
</dbReference>
<dbReference type="RefSeq" id="NP_695909.1">
    <property type="nucleotide sequence ID" value="NC_004307.2"/>
</dbReference>
<dbReference type="RefSeq" id="WP_007052857.1">
    <property type="nucleotide sequence ID" value="NC_004307.2"/>
</dbReference>
<dbReference type="SMR" id="Q8G6B8"/>
<dbReference type="STRING" id="206672.BL0728"/>
<dbReference type="EnsemblBacteria" id="AAN24545">
    <property type="protein sequence ID" value="AAN24545"/>
    <property type="gene ID" value="BL0728"/>
</dbReference>
<dbReference type="KEGG" id="blo:BL0728"/>
<dbReference type="PATRIC" id="fig|206672.9.peg.425"/>
<dbReference type="HOGENOM" id="CLU_087936_2_1_11"/>
<dbReference type="OrthoDB" id="5293449at2"/>
<dbReference type="PhylomeDB" id="Q8G6B8"/>
<dbReference type="Proteomes" id="UP000000439">
    <property type="component" value="Chromosome"/>
</dbReference>
<dbReference type="GO" id="GO:0005737">
    <property type="term" value="C:cytoplasm"/>
    <property type="evidence" value="ECO:0007669"/>
    <property type="project" value="UniProtKB-SubCell"/>
</dbReference>
<dbReference type="GO" id="GO:0009379">
    <property type="term" value="C:Holliday junction helicase complex"/>
    <property type="evidence" value="ECO:0007669"/>
    <property type="project" value="InterPro"/>
</dbReference>
<dbReference type="GO" id="GO:0048476">
    <property type="term" value="C:Holliday junction resolvase complex"/>
    <property type="evidence" value="ECO:0007669"/>
    <property type="project" value="UniProtKB-UniRule"/>
</dbReference>
<dbReference type="GO" id="GO:0005524">
    <property type="term" value="F:ATP binding"/>
    <property type="evidence" value="ECO:0007669"/>
    <property type="project" value="InterPro"/>
</dbReference>
<dbReference type="GO" id="GO:0000400">
    <property type="term" value="F:four-way junction DNA binding"/>
    <property type="evidence" value="ECO:0007669"/>
    <property type="project" value="UniProtKB-UniRule"/>
</dbReference>
<dbReference type="GO" id="GO:0009378">
    <property type="term" value="F:four-way junction helicase activity"/>
    <property type="evidence" value="ECO:0007669"/>
    <property type="project" value="InterPro"/>
</dbReference>
<dbReference type="GO" id="GO:0006310">
    <property type="term" value="P:DNA recombination"/>
    <property type="evidence" value="ECO:0007669"/>
    <property type="project" value="UniProtKB-UniRule"/>
</dbReference>
<dbReference type="GO" id="GO:0006281">
    <property type="term" value="P:DNA repair"/>
    <property type="evidence" value="ECO:0007669"/>
    <property type="project" value="UniProtKB-UniRule"/>
</dbReference>
<dbReference type="CDD" id="cd14332">
    <property type="entry name" value="UBA_RuvA_C"/>
    <property type="match status" value="1"/>
</dbReference>
<dbReference type="Gene3D" id="1.10.150.20">
    <property type="entry name" value="5' to 3' exonuclease, C-terminal subdomain"/>
    <property type="match status" value="1"/>
</dbReference>
<dbReference type="Gene3D" id="1.10.8.10">
    <property type="entry name" value="DNA helicase RuvA subunit, C-terminal domain"/>
    <property type="match status" value="1"/>
</dbReference>
<dbReference type="Gene3D" id="2.40.50.140">
    <property type="entry name" value="Nucleic acid-binding proteins"/>
    <property type="match status" value="1"/>
</dbReference>
<dbReference type="HAMAP" id="MF_00031">
    <property type="entry name" value="DNA_HJ_migration_RuvA"/>
    <property type="match status" value="1"/>
</dbReference>
<dbReference type="InterPro" id="IPR013849">
    <property type="entry name" value="DNA_helicase_Holl-junc_RuvA_I"/>
</dbReference>
<dbReference type="InterPro" id="IPR003583">
    <property type="entry name" value="Hlx-hairpin-Hlx_DNA-bd_motif"/>
</dbReference>
<dbReference type="InterPro" id="IPR012340">
    <property type="entry name" value="NA-bd_OB-fold"/>
</dbReference>
<dbReference type="InterPro" id="IPR000085">
    <property type="entry name" value="RuvA"/>
</dbReference>
<dbReference type="InterPro" id="IPR010994">
    <property type="entry name" value="RuvA_2-like"/>
</dbReference>
<dbReference type="InterPro" id="IPR011114">
    <property type="entry name" value="RuvA_C"/>
</dbReference>
<dbReference type="InterPro" id="IPR036267">
    <property type="entry name" value="RuvA_C_sf"/>
</dbReference>
<dbReference type="NCBIfam" id="TIGR00084">
    <property type="entry name" value="ruvA"/>
    <property type="match status" value="1"/>
</dbReference>
<dbReference type="Pfam" id="PF14520">
    <property type="entry name" value="HHH_5"/>
    <property type="match status" value="1"/>
</dbReference>
<dbReference type="Pfam" id="PF07499">
    <property type="entry name" value="RuvA_C"/>
    <property type="match status" value="1"/>
</dbReference>
<dbReference type="Pfam" id="PF01330">
    <property type="entry name" value="RuvA_N"/>
    <property type="match status" value="1"/>
</dbReference>
<dbReference type="SMART" id="SM00278">
    <property type="entry name" value="HhH1"/>
    <property type="match status" value="2"/>
</dbReference>
<dbReference type="SUPFAM" id="SSF46929">
    <property type="entry name" value="DNA helicase RuvA subunit, C-terminal domain"/>
    <property type="match status" value="1"/>
</dbReference>
<dbReference type="SUPFAM" id="SSF50249">
    <property type="entry name" value="Nucleic acid-binding proteins"/>
    <property type="match status" value="1"/>
</dbReference>
<dbReference type="SUPFAM" id="SSF47781">
    <property type="entry name" value="RuvA domain 2-like"/>
    <property type="match status" value="1"/>
</dbReference>
<organism>
    <name type="scientific">Bifidobacterium longum (strain NCC 2705)</name>
    <dbReference type="NCBI Taxonomy" id="206672"/>
    <lineage>
        <taxon>Bacteria</taxon>
        <taxon>Bacillati</taxon>
        <taxon>Actinomycetota</taxon>
        <taxon>Actinomycetes</taxon>
        <taxon>Bifidobacteriales</taxon>
        <taxon>Bifidobacteriaceae</taxon>
        <taxon>Bifidobacterium</taxon>
    </lineage>
</organism>
<feature type="chain" id="PRO_0000094604" description="Holliday junction branch migration complex subunit RuvA">
    <location>
        <begin position="1"/>
        <end position="208"/>
    </location>
</feature>
<feature type="region of interest" description="Domain I" evidence="1">
    <location>
        <begin position="1"/>
        <end position="63"/>
    </location>
</feature>
<feature type="region of interest" description="Domain II" evidence="1">
    <location>
        <begin position="64"/>
        <end position="142"/>
    </location>
</feature>
<feature type="region of interest" description="Flexible linker" evidence="1">
    <location>
        <begin position="143"/>
        <end position="151"/>
    </location>
</feature>
<feature type="region of interest" description="Domain III" evidence="1">
    <location>
        <begin position="151"/>
        <end position="208"/>
    </location>
</feature>
<sequence>MIGMLTGRVESVETDTALIDVGGVGYEVRMSATDLSRLHAGQDTRVFTYMNLSQDAITLHGFLDRDAKKTFLQLIKVSGIGPKVAQSLLSTLTPSQLAHAIADNDATALAKAPGLGKKGAQKIILELKGSIDLSQIEGASAQAATSKSPVDTGTEQVVEGLISLGWRQQDAQQAVAEACAENDIPTPLATDDVPRVLRLALALMDRGR</sequence>
<keyword id="KW-0963">Cytoplasm</keyword>
<keyword id="KW-0227">DNA damage</keyword>
<keyword id="KW-0233">DNA recombination</keyword>
<keyword id="KW-0234">DNA repair</keyword>
<keyword id="KW-0238">DNA-binding</keyword>
<keyword id="KW-1185">Reference proteome</keyword>
<protein>
    <recommendedName>
        <fullName evidence="1">Holliday junction branch migration complex subunit RuvA</fullName>
    </recommendedName>
</protein>